<comment type="function">
    <text evidence="1">Catalyzes the S-adenosylmethionine monomethyl esterification of trans-aconitate.</text>
</comment>
<comment type="catalytic activity">
    <reaction evidence="1">
        <text>trans-aconitate + S-adenosyl-L-methionine = (E)-3-(methoxycarbonyl)pent-2-enedioate + S-adenosyl-L-homocysteine</text>
        <dbReference type="Rhea" id="RHEA:14969"/>
        <dbReference type="ChEBI" id="CHEBI:15708"/>
        <dbReference type="ChEBI" id="CHEBI:57470"/>
        <dbReference type="ChEBI" id="CHEBI:57856"/>
        <dbReference type="ChEBI" id="CHEBI:59789"/>
        <dbReference type="EC" id="2.1.1.144"/>
    </reaction>
</comment>
<comment type="subcellular location">
    <subcellularLocation>
        <location evidence="1">Cytoplasm</location>
    </subcellularLocation>
</comment>
<comment type="similarity">
    <text evidence="1">Belongs to the methyltransferase superfamily. Tam family.</text>
</comment>
<feature type="chain" id="PRO_1000056578" description="Trans-aconitate 2-methyltransferase">
    <location>
        <begin position="1"/>
        <end position="256"/>
    </location>
</feature>
<gene>
    <name evidence="1" type="primary">tam</name>
    <name type="ordered locus">RPD_3451</name>
</gene>
<sequence length="256" mass="28915">MADWSAEQYLKFEDERTRPARELLAQVPVLAPRKVADIGCGPGNSTELLVERWPQAAVIGVDTSADMLRQARERLPQQKFIEANVAHWAPPPDTDVLFANAVFQWVPDHLKHLKRLVSGLETGGALAVQMPDNLDEPSHILMREVAFEEPWRHQLSKAAESRDMLPKPGVYYDALRPLCSRLEIWHTVYNHVLDDAAAIVEWVKGTGLRPFIDPLDLHERKAYLAAYTARVAAAYPPQADGKVLLRFPRIFFVAIK</sequence>
<dbReference type="EC" id="2.1.1.144" evidence="1"/>
<dbReference type="EMBL" id="CP000283">
    <property type="protein sequence ID" value="ABE40674.1"/>
    <property type="molecule type" value="Genomic_DNA"/>
</dbReference>
<dbReference type="SMR" id="Q133R5"/>
<dbReference type="STRING" id="316057.RPD_3451"/>
<dbReference type="KEGG" id="rpd:RPD_3451"/>
<dbReference type="eggNOG" id="COG4106">
    <property type="taxonomic scope" value="Bacteria"/>
</dbReference>
<dbReference type="HOGENOM" id="CLU_037990_5_2_5"/>
<dbReference type="BioCyc" id="RPAL316057:RPD_RS17355-MONOMER"/>
<dbReference type="Proteomes" id="UP000001818">
    <property type="component" value="Chromosome"/>
</dbReference>
<dbReference type="GO" id="GO:0005737">
    <property type="term" value="C:cytoplasm"/>
    <property type="evidence" value="ECO:0007669"/>
    <property type="project" value="UniProtKB-SubCell"/>
</dbReference>
<dbReference type="GO" id="GO:0030798">
    <property type="term" value="F:trans-aconitate 2-methyltransferase activity"/>
    <property type="evidence" value="ECO:0007669"/>
    <property type="project" value="UniProtKB-UniRule"/>
</dbReference>
<dbReference type="GO" id="GO:0032259">
    <property type="term" value="P:methylation"/>
    <property type="evidence" value="ECO:0007669"/>
    <property type="project" value="UniProtKB-KW"/>
</dbReference>
<dbReference type="CDD" id="cd02440">
    <property type="entry name" value="AdoMet_MTases"/>
    <property type="match status" value="1"/>
</dbReference>
<dbReference type="Gene3D" id="1.10.150.290">
    <property type="entry name" value="S-adenosyl-L-methionine-dependent methyltransferases"/>
    <property type="match status" value="1"/>
</dbReference>
<dbReference type="Gene3D" id="3.40.50.150">
    <property type="entry name" value="Vaccinia Virus protein VP39"/>
    <property type="match status" value="1"/>
</dbReference>
<dbReference type="HAMAP" id="MF_00560">
    <property type="entry name" value="Tran_acon_Me_trans"/>
    <property type="match status" value="1"/>
</dbReference>
<dbReference type="InterPro" id="IPR041698">
    <property type="entry name" value="Methyltransf_25"/>
</dbReference>
<dbReference type="InterPro" id="IPR029063">
    <property type="entry name" value="SAM-dependent_MTases_sf"/>
</dbReference>
<dbReference type="InterPro" id="IPR023506">
    <property type="entry name" value="Trans-aconitate_MeTrfase"/>
</dbReference>
<dbReference type="InterPro" id="IPR023149">
    <property type="entry name" value="Trans_acon_MeTrfase_C"/>
</dbReference>
<dbReference type="NCBIfam" id="NF002463">
    <property type="entry name" value="PRK01683.1"/>
    <property type="match status" value="1"/>
</dbReference>
<dbReference type="PANTHER" id="PTHR43861:SF1">
    <property type="entry name" value="TRANS-ACONITATE 2-METHYLTRANSFERASE"/>
    <property type="match status" value="1"/>
</dbReference>
<dbReference type="PANTHER" id="PTHR43861">
    <property type="entry name" value="TRANS-ACONITATE 2-METHYLTRANSFERASE-RELATED"/>
    <property type="match status" value="1"/>
</dbReference>
<dbReference type="Pfam" id="PF13649">
    <property type="entry name" value="Methyltransf_25"/>
    <property type="match status" value="1"/>
</dbReference>
<dbReference type="SUPFAM" id="SSF53335">
    <property type="entry name" value="S-adenosyl-L-methionine-dependent methyltransferases"/>
    <property type="match status" value="1"/>
</dbReference>
<name>TAM_RHOPS</name>
<accession>Q133R5</accession>
<organism>
    <name type="scientific">Rhodopseudomonas palustris (strain BisB5)</name>
    <dbReference type="NCBI Taxonomy" id="316057"/>
    <lineage>
        <taxon>Bacteria</taxon>
        <taxon>Pseudomonadati</taxon>
        <taxon>Pseudomonadota</taxon>
        <taxon>Alphaproteobacteria</taxon>
        <taxon>Hyphomicrobiales</taxon>
        <taxon>Nitrobacteraceae</taxon>
        <taxon>Rhodopseudomonas</taxon>
    </lineage>
</organism>
<keyword id="KW-0963">Cytoplasm</keyword>
<keyword id="KW-0489">Methyltransferase</keyword>
<keyword id="KW-0949">S-adenosyl-L-methionine</keyword>
<keyword id="KW-0808">Transferase</keyword>
<proteinExistence type="inferred from homology"/>
<evidence type="ECO:0000255" key="1">
    <source>
        <dbReference type="HAMAP-Rule" id="MF_00560"/>
    </source>
</evidence>
<protein>
    <recommendedName>
        <fullName evidence="1">Trans-aconitate 2-methyltransferase</fullName>
        <ecNumber evidence="1">2.1.1.144</ecNumber>
    </recommendedName>
</protein>
<reference key="1">
    <citation type="submission" date="2006-03" db="EMBL/GenBank/DDBJ databases">
        <title>Complete sequence of Rhodopseudomonas palustris BisB5.</title>
        <authorList>
            <consortium name="US DOE Joint Genome Institute"/>
            <person name="Copeland A."/>
            <person name="Lucas S."/>
            <person name="Lapidus A."/>
            <person name="Barry K."/>
            <person name="Detter J.C."/>
            <person name="Glavina del Rio T."/>
            <person name="Hammon N."/>
            <person name="Israni S."/>
            <person name="Dalin E."/>
            <person name="Tice H."/>
            <person name="Pitluck S."/>
            <person name="Chain P."/>
            <person name="Malfatti S."/>
            <person name="Shin M."/>
            <person name="Vergez L."/>
            <person name="Schmutz J."/>
            <person name="Larimer F."/>
            <person name="Land M."/>
            <person name="Hauser L."/>
            <person name="Pelletier D.A."/>
            <person name="Kyrpides N."/>
            <person name="Lykidis A."/>
            <person name="Oda Y."/>
            <person name="Harwood C.S."/>
            <person name="Richardson P."/>
        </authorList>
    </citation>
    <scope>NUCLEOTIDE SEQUENCE [LARGE SCALE GENOMIC DNA]</scope>
    <source>
        <strain>BisB5</strain>
    </source>
</reference>